<reference key="1">
    <citation type="journal article" date="2008" name="Cell. Mol. Life Sci.">
        <title>Molecular diversity and evolution of cystine knot toxins of the tarantula Chilobrachys jingzhao.</title>
        <authorList>
            <person name="Chen J."/>
            <person name="Deng M."/>
            <person name="He Q."/>
            <person name="Meng E."/>
            <person name="Jiang L."/>
            <person name="Liao Z."/>
            <person name="Rong M."/>
            <person name="Liang S."/>
        </authorList>
    </citation>
    <scope>NUCLEOTIDE SEQUENCE [LARGE SCALE MRNA]</scope>
    <scope>TOXIN TARGET</scope>
    <scope>FUNCTION</scope>
    <source>
        <tissue>Venom gland</tissue>
    </source>
</reference>
<reference key="2">
    <citation type="journal article" date="2007" name="Proteomics">
        <title>Proteomic and peptidomic analysis of the venom from Chinese tarantula Chilobrachys jingzhao.</title>
        <authorList>
            <person name="Liao Z."/>
            <person name="Cao J."/>
            <person name="Li S."/>
            <person name="Yan X."/>
            <person name="Hu W."/>
            <person name="He Q."/>
            <person name="Chen J."/>
            <person name="Tang J."/>
            <person name="Xie J."/>
            <person name="Liang S."/>
        </authorList>
    </citation>
    <scope>PROTEIN SEQUENCE OF 49-83</scope>
    <scope>MASS SPECTROMETRY</scope>
    <source>
        <tissue>Venom</tissue>
    </source>
</reference>
<evidence type="ECO:0000250" key="1"/>
<evidence type="ECO:0000255" key="2"/>
<evidence type="ECO:0000269" key="3">
    <source>
    </source>
</evidence>
<evidence type="ECO:0000269" key="4">
    <source>
    </source>
</evidence>
<accession>B1P1H3</accession>
<sequence length="83" mass="9161">MRFHTLLFLSFLLLVSCALICTAQHPGLEKSGMFHENVGKGQHIEEKRSCIERMQTCEVEAGLPCCSGAPCICPYIGDCICIQ</sequence>
<name>JZ54A_CHIGU</name>
<comment type="function">
    <text evidence="4">Inhibits TTX-sensitive sodium currents in rat dorsal root ganglion (DRG) neurons.</text>
</comment>
<comment type="subcellular location">
    <subcellularLocation>
        <location>Secreted</location>
    </subcellularLocation>
</comment>
<comment type="tissue specificity">
    <text>Expressed by the venom gland.</text>
</comment>
<comment type="domain">
    <text evidence="1">The presence of a 'disulfide through disulfide knot' structurally defines this protein as a knottin.</text>
</comment>
<comment type="mass spectrometry" mass="3705.1" method="MALDI" evidence="3">
    <text>Monoisotopic mass.</text>
</comment>
<comment type="similarity">
    <text>Belongs to the neurotoxin 07 (Beta/delta-agtx) family. 03 (aga-4) subfamily. JZTX sub-subfamily.</text>
</comment>
<proteinExistence type="evidence at protein level"/>
<feature type="signal peptide" evidence="2">
    <location>
        <begin position="1"/>
        <end position="23"/>
    </location>
</feature>
<feature type="propeptide" id="PRO_0000398520" evidence="3">
    <location>
        <begin position="24"/>
        <end position="48"/>
    </location>
</feature>
<feature type="peptide" id="PRO_0000398521" description="U25-theraphotoxin-Cg1a">
    <location>
        <begin position="49"/>
        <end position="83"/>
    </location>
</feature>
<feature type="disulfide bond" evidence="1">
    <location>
        <begin position="50"/>
        <end position="66"/>
    </location>
</feature>
<feature type="disulfide bond" evidence="1">
    <location>
        <begin position="57"/>
        <end position="71"/>
    </location>
</feature>
<feature type="disulfide bond" evidence="1">
    <location>
        <begin position="65"/>
        <end position="81"/>
    </location>
</feature>
<keyword id="KW-0903">Direct protein sequencing</keyword>
<keyword id="KW-1015">Disulfide bond</keyword>
<keyword id="KW-0872">Ion channel impairing toxin</keyword>
<keyword id="KW-0960">Knottin</keyword>
<keyword id="KW-0964">Secreted</keyword>
<keyword id="KW-0732">Signal</keyword>
<keyword id="KW-0800">Toxin</keyword>
<dbReference type="EMBL" id="EU233904">
    <property type="protein sequence ID" value="ABY71723.1"/>
    <property type="molecule type" value="mRNA"/>
</dbReference>
<dbReference type="SMR" id="B1P1H3"/>
<dbReference type="ArachnoServer" id="AS000852">
    <property type="toxin name" value="U25-theraphotoxin-Cg1a"/>
</dbReference>
<dbReference type="GO" id="GO:0005576">
    <property type="term" value="C:extracellular region"/>
    <property type="evidence" value="ECO:0007669"/>
    <property type="project" value="UniProtKB-SubCell"/>
</dbReference>
<dbReference type="GO" id="GO:0099106">
    <property type="term" value="F:ion channel regulator activity"/>
    <property type="evidence" value="ECO:0007669"/>
    <property type="project" value="UniProtKB-KW"/>
</dbReference>
<dbReference type="GO" id="GO:0090729">
    <property type="term" value="F:toxin activity"/>
    <property type="evidence" value="ECO:0007669"/>
    <property type="project" value="UniProtKB-KW"/>
</dbReference>
<protein>
    <recommendedName>
        <fullName>U25-theraphotoxin-Cg1a</fullName>
        <shortName>U25-TRTX-Cg1a</shortName>
    </recommendedName>
    <alternativeName>
        <fullName>Jingzhaotoxin-54</fullName>
        <shortName>JZTX-54</shortName>
    </alternativeName>
    <alternativeName>
        <fullName>Peptide F1-20.74</fullName>
    </alternativeName>
</protein>
<organism>
    <name type="scientific">Chilobrachys guangxiensis</name>
    <name type="common">Chinese earth tiger tarantula</name>
    <name type="synonym">Chilobrachys jingzhao</name>
    <dbReference type="NCBI Taxonomy" id="278060"/>
    <lineage>
        <taxon>Eukaryota</taxon>
        <taxon>Metazoa</taxon>
        <taxon>Ecdysozoa</taxon>
        <taxon>Arthropoda</taxon>
        <taxon>Chelicerata</taxon>
        <taxon>Arachnida</taxon>
        <taxon>Araneae</taxon>
        <taxon>Mygalomorphae</taxon>
        <taxon>Theraphosidae</taxon>
        <taxon>Chilobrachys</taxon>
    </lineage>
</organism>